<accession>Q1QR80</accession>
<dbReference type="EC" id="2.7.7.38" evidence="1"/>
<dbReference type="EMBL" id="CP000319">
    <property type="protein sequence ID" value="ABE61267.1"/>
    <property type="molecule type" value="Genomic_DNA"/>
</dbReference>
<dbReference type="RefSeq" id="WP_011508971.1">
    <property type="nucleotide sequence ID" value="NC_007964.1"/>
</dbReference>
<dbReference type="SMR" id="Q1QR80"/>
<dbReference type="STRING" id="323097.Nham_0376"/>
<dbReference type="KEGG" id="nha:Nham_0376"/>
<dbReference type="eggNOG" id="COG1212">
    <property type="taxonomic scope" value="Bacteria"/>
</dbReference>
<dbReference type="HOGENOM" id="CLU_065038_0_1_5"/>
<dbReference type="OrthoDB" id="9815559at2"/>
<dbReference type="UniPathway" id="UPA00030"/>
<dbReference type="UniPathway" id="UPA00358">
    <property type="reaction ID" value="UER00476"/>
</dbReference>
<dbReference type="Proteomes" id="UP000001953">
    <property type="component" value="Chromosome"/>
</dbReference>
<dbReference type="GO" id="GO:0005829">
    <property type="term" value="C:cytosol"/>
    <property type="evidence" value="ECO:0007669"/>
    <property type="project" value="TreeGrafter"/>
</dbReference>
<dbReference type="GO" id="GO:0008690">
    <property type="term" value="F:3-deoxy-manno-octulosonate cytidylyltransferase activity"/>
    <property type="evidence" value="ECO:0007669"/>
    <property type="project" value="UniProtKB-UniRule"/>
</dbReference>
<dbReference type="GO" id="GO:0033468">
    <property type="term" value="P:CMP-keto-3-deoxy-D-manno-octulosonic acid biosynthetic process"/>
    <property type="evidence" value="ECO:0007669"/>
    <property type="project" value="UniProtKB-UniRule"/>
</dbReference>
<dbReference type="GO" id="GO:0009103">
    <property type="term" value="P:lipopolysaccharide biosynthetic process"/>
    <property type="evidence" value="ECO:0007669"/>
    <property type="project" value="UniProtKB-UniRule"/>
</dbReference>
<dbReference type="CDD" id="cd02517">
    <property type="entry name" value="CMP-KDO-Synthetase"/>
    <property type="match status" value="1"/>
</dbReference>
<dbReference type="Gene3D" id="3.90.550.10">
    <property type="entry name" value="Spore Coat Polysaccharide Biosynthesis Protein SpsA, Chain A"/>
    <property type="match status" value="1"/>
</dbReference>
<dbReference type="HAMAP" id="MF_00057">
    <property type="entry name" value="KdsB"/>
    <property type="match status" value="1"/>
</dbReference>
<dbReference type="InterPro" id="IPR003329">
    <property type="entry name" value="Cytidylyl_trans"/>
</dbReference>
<dbReference type="InterPro" id="IPR004528">
    <property type="entry name" value="KdsB"/>
</dbReference>
<dbReference type="InterPro" id="IPR029044">
    <property type="entry name" value="Nucleotide-diphossugar_trans"/>
</dbReference>
<dbReference type="NCBIfam" id="TIGR00466">
    <property type="entry name" value="kdsB"/>
    <property type="match status" value="1"/>
</dbReference>
<dbReference type="NCBIfam" id="NF003948">
    <property type="entry name" value="PRK05450.1-1"/>
    <property type="match status" value="1"/>
</dbReference>
<dbReference type="NCBIfam" id="NF003952">
    <property type="entry name" value="PRK05450.1-5"/>
    <property type="match status" value="1"/>
</dbReference>
<dbReference type="PANTHER" id="PTHR42866">
    <property type="entry name" value="3-DEOXY-MANNO-OCTULOSONATE CYTIDYLYLTRANSFERASE"/>
    <property type="match status" value="1"/>
</dbReference>
<dbReference type="PANTHER" id="PTHR42866:SF2">
    <property type="entry name" value="3-DEOXY-MANNO-OCTULOSONATE CYTIDYLYLTRANSFERASE, MITOCHONDRIAL"/>
    <property type="match status" value="1"/>
</dbReference>
<dbReference type="Pfam" id="PF02348">
    <property type="entry name" value="CTP_transf_3"/>
    <property type="match status" value="1"/>
</dbReference>
<dbReference type="SUPFAM" id="SSF53448">
    <property type="entry name" value="Nucleotide-diphospho-sugar transferases"/>
    <property type="match status" value="1"/>
</dbReference>
<proteinExistence type="inferred from homology"/>
<gene>
    <name evidence="1" type="primary">kdsB</name>
    <name type="ordered locus">Nham_0376</name>
</gene>
<reference key="1">
    <citation type="submission" date="2006-03" db="EMBL/GenBank/DDBJ databases">
        <title>Complete sequence of chromosome of Nitrobacter hamburgensis X14.</title>
        <authorList>
            <consortium name="US DOE Joint Genome Institute"/>
            <person name="Copeland A."/>
            <person name="Lucas S."/>
            <person name="Lapidus A."/>
            <person name="Barry K."/>
            <person name="Detter J.C."/>
            <person name="Glavina del Rio T."/>
            <person name="Hammon N."/>
            <person name="Israni S."/>
            <person name="Dalin E."/>
            <person name="Tice H."/>
            <person name="Pitluck S."/>
            <person name="Chain P."/>
            <person name="Malfatti S."/>
            <person name="Shin M."/>
            <person name="Vergez L."/>
            <person name="Schmutz J."/>
            <person name="Larimer F."/>
            <person name="Land M."/>
            <person name="Hauser L."/>
            <person name="Kyrpides N."/>
            <person name="Ivanova N."/>
            <person name="Ward B."/>
            <person name="Arp D."/>
            <person name="Klotz M."/>
            <person name="Stein L."/>
            <person name="O'Mullan G."/>
            <person name="Starkenburg S."/>
            <person name="Sayavedra L."/>
            <person name="Poret-Peterson A.T."/>
            <person name="Gentry M.E."/>
            <person name="Bruce D."/>
            <person name="Richardson P."/>
        </authorList>
    </citation>
    <scope>NUCLEOTIDE SEQUENCE [LARGE SCALE GENOMIC DNA]</scope>
    <source>
        <strain>DSM 10229 / NCIMB 13809 / X14</strain>
    </source>
</reference>
<feature type="chain" id="PRO_0000370107" description="3-deoxy-manno-octulosonate cytidylyltransferase">
    <location>
        <begin position="1"/>
        <end position="258"/>
    </location>
</feature>
<evidence type="ECO:0000255" key="1">
    <source>
        <dbReference type="HAMAP-Rule" id="MF_00057"/>
    </source>
</evidence>
<protein>
    <recommendedName>
        <fullName evidence="1">3-deoxy-manno-octulosonate cytidylyltransferase</fullName>
        <ecNumber evidence="1">2.7.7.38</ecNumber>
    </recommendedName>
    <alternativeName>
        <fullName evidence="1">CMP-2-keto-3-deoxyoctulosonic acid synthase</fullName>
        <shortName evidence="1">CKS</shortName>
        <shortName evidence="1">CMP-KDO synthase</shortName>
    </alternativeName>
</protein>
<sequence>MTKTRTLVLIPARMAATRLPGKPLLDIGGLPMVVHVLRRAETAGIGRVAVATDTPEIAAAVTAHGGEAIMTRADHPSGSDRVFEALDRLDPDGRIETIINLQGDFPTIRPDIIRDVLKPLADPAVDIATLAAEIHSDEEATNPNVVKAVGSPVAPRRLRALYFTRATAPHGDGPRYHHIGLYAYRRKALQRFVELPPSPLERQERLEQLRALEGGMRIDIMIVDDVPRGVDTAADLETARRILASVPIPKLAYPRSNL</sequence>
<name>KDSB_NITHX</name>
<comment type="function">
    <text evidence="1">Activates KDO (a required 8-carbon sugar) for incorporation into bacterial lipopolysaccharide in Gram-negative bacteria.</text>
</comment>
<comment type="catalytic activity">
    <reaction evidence="1">
        <text>3-deoxy-alpha-D-manno-oct-2-ulosonate + CTP = CMP-3-deoxy-beta-D-manno-octulosonate + diphosphate</text>
        <dbReference type="Rhea" id="RHEA:23448"/>
        <dbReference type="ChEBI" id="CHEBI:33019"/>
        <dbReference type="ChEBI" id="CHEBI:37563"/>
        <dbReference type="ChEBI" id="CHEBI:85986"/>
        <dbReference type="ChEBI" id="CHEBI:85987"/>
        <dbReference type="EC" id="2.7.7.38"/>
    </reaction>
</comment>
<comment type="pathway">
    <text evidence="1">Nucleotide-sugar biosynthesis; CMP-3-deoxy-D-manno-octulosonate biosynthesis; CMP-3-deoxy-D-manno-octulosonate from 3-deoxy-D-manno-octulosonate and CTP: step 1/1.</text>
</comment>
<comment type="pathway">
    <text evidence="1">Bacterial outer membrane biogenesis; lipopolysaccharide biosynthesis.</text>
</comment>
<comment type="subcellular location">
    <subcellularLocation>
        <location evidence="1">Cytoplasm</location>
    </subcellularLocation>
</comment>
<comment type="similarity">
    <text evidence="1">Belongs to the KdsB family.</text>
</comment>
<keyword id="KW-0963">Cytoplasm</keyword>
<keyword id="KW-0448">Lipopolysaccharide biosynthesis</keyword>
<keyword id="KW-0548">Nucleotidyltransferase</keyword>
<keyword id="KW-1185">Reference proteome</keyword>
<keyword id="KW-0808">Transferase</keyword>
<organism>
    <name type="scientific">Nitrobacter hamburgensis (strain DSM 10229 / NCIMB 13809 / X14)</name>
    <dbReference type="NCBI Taxonomy" id="323097"/>
    <lineage>
        <taxon>Bacteria</taxon>
        <taxon>Pseudomonadati</taxon>
        <taxon>Pseudomonadota</taxon>
        <taxon>Alphaproteobacteria</taxon>
        <taxon>Hyphomicrobiales</taxon>
        <taxon>Nitrobacteraceae</taxon>
        <taxon>Nitrobacter</taxon>
    </lineage>
</organism>